<accession>B4MZ79</accession>
<reference key="1">
    <citation type="journal article" date="2007" name="Nature">
        <title>Evolution of genes and genomes on the Drosophila phylogeny.</title>
        <authorList>
            <consortium name="Drosophila 12 genomes consortium"/>
        </authorList>
    </citation>
    <scope>NUCLEOTIDE SEQUENCE [LARGE SCALE GENOMIC DNA]</scope>
    <source>
        <strain>Tucson 14030-0811.24</strain>
    </source>
</reference>
<comment type="function">
    <text evidence="1">Component of the cytosolic iron-sulfur (Fe-S) protein assembly (CIA) machinery. Required for the maturation of extramitochondrial Fe-S proteins. Part of an electron transfer chain functioning in an early step of cytosolic Fe-S biogenesis, facilitating the de novo assembly of a [4Fe-4S] cluster on the cytosolic Fe-S scaffold complex. Electrons are transferred from NADPH via a FAD- and FMN-containing diflavin oxidoreductase. Together with the diflavin oxidoreductase, also required for the assembly of the diferric tyrosyl radical cofactor of ribonucleotide reductase (RNR), probably by providing electrons for reduction during radical cofactor maturation in the catalytic small subunit.</text>
</comment>
<comment type="cofactor">
    <cofactor evidence="1">
        <name>[2Fe-2S] cluster</name>
        <dbReference type="ChEBI" id="CHEBI:190135"/>
    </cofactor>
</comment>
<comment type="cofactor">
    <cofactor evidence="1">
        <name>[4Fe-4S] cluster</name>
        <dbReference type="ChEBI" id="CHEBI:49883"/>
    </cofactor>
</comment>
<comment type="subunit">
    <text evidence="1">Monomer.</text>
</comment>
<comment type="subcellular location">
    <subcellularLocation>
        <location evidence="1">Cytoplasm</location>
    </subcellularLocation>
    <subcellularLocation>
        <location evidence="1">Mitochondrion intermembrane space</location>
    </subcellularLocation>
</comment>
<comment type="domain">
    <text evidence="1">The C-terminal domain binds 2 Fe-S clusters but is otherwise mostly in an intrinsically disordered conformation.</text>
</comment>
<comment type="domain">
    <text evidence="1">The N-terminal domain has structural similarity with S-adenosyl-L-methionine-dependent methyltransferases, but does not bind S-adenosyl-L-methionine. It is required for correct assembly of the 2 Fe-S clusters.</text>
</comment>
<comment type="domain">
    <text evidence="1">The twin Cx2C motifs are involved in the recognition by the mitochondrial MIA40-ERV1 disulfide relay system. The formation of 2 disulfide bonds in the Cx2C motifs through dithiol/disulfide exchange reactions effectively traps the protein in the mitochondrial intermembrane space.</text>
</comment>
<comment type="similarity">
    <text evidence="1">Belongs to the anamorsin family.</text>
</comment>
<organism>
    <name type="scientific">Drosophila willistoni</name>
    <name type="common">Fruit fly</name>
    <dbReference type="NCBI Taxonomy" id="7260"/>
    <lineage>
        <taxon>Eukaryota</taxon>
        <taxon>Metazoa</taxon>
        <taxon>Ecdysozoa</taxon>
        <taxon>Arthropoda</taxon>
        <taxon>Hexapoda</taxon>
        <taxon>Insecta</taxon>
        <taxon>Pterygota</taxon>
        <taxon>Neoptera</taxon>
        <taxon>Endopterygota</taxon>
        <taxon>Diptera</taxon>
        <taxon>Brachycera</taxon>
        <taxon>Muscomorpha</taxon>
        <taxon>Ephydroidea</taxon>
        <taxon>Drosophilidae</taxon>
        <taxon>Drosophila</taxon>
        <taxon>Sophophora</taxon>
    </lineage>
</organism>
<proteinExistence type="inferred from homology"/>
<protein>
    <recommendedName>
        <fullName evidence="1">Anamorsin homolog</fullName>
    </recommendedName>
    <alternativeName>
        <fullName evidence="1">Fe-S cluster assembly protein DRE2 homolog</fullName>
    </alternativeName>
</protein>
<name>DRE2_DROWI</name>
<evidence type="ECO:0000255" key="1">
    <source>
        <dbReference type="HAMAP-Rule" id="MF_03115"/>
    </source>
</evidence>
<gene>
    <name evidence="1" type="primary">CIAPIN1</name>
    <name evidence="1" type="synonym">l(2)35Bg</name>
    <name type="ORF">GK18068</name>
</gene>
<dbReference type="EMBL" id="CH963913">
    <property type="protein sequence ID" value="EDW77475.1"/>
    <property type="molecule type" value="Genomic_DNA"/>
</dbReference>
<dbReference type="STRING" id="7260.B4MZ79"/>
<dbReference type="EnsemblMetazoa" id="FBtr0248719">
    <property type="protein sequence ID" value="FBpp0247211"/>
    <property type="gene ID" value="FBgn0220067"/>
</dbReference>
<dbReference type="EnsemblMetazoa" id="XM_002066453.4">
    <property type="protein sequence ID" value="XP_002066489.1"/>
    <property type="gene ID" value="LOC6643513"/>
</dbReference>
<dbReference type="GeneID" id="6643513"/>
<dbReference type="KEGG" id="dwi:6643513"/>
<dbReference type="CTD" id="57019"/>
<dbReference type="eggNOG" id="KOG4020">
    <property type="taxonomic scope" value="Eukaryota"/>
</dbReference>
<dbReference type="HOGENOM" id="CLU_064393_1_0_1"/>
<dbReference type="OMA" id="GFINCRE"/>
<dbReference type="OrthoDB" id="311633at2759"/>
<dbReference type="PhylomeDB" id="B4MZ79"/>
<dbReference type="Proteomes" id="UP000007798">
    <property type="component" value="Unassembled WGS sequence"/>
</dbReference>
<dbReference type="GO" id="GO:0005758">
    <property type="term" value="C:mitochondrial intermembrane space"/>
    <property type="evidence" value="ECO:0007669"/>
    <property type="project" value="UniProtKB-SubCell"/>
</dbReference>
<dbReference type="GO" id="GO:0051537">
    <property type="term" value="F:2 iron, 2 sulfur cluster binding"/>
    <property type="evidence" value="ECO:0007669"/>
    <property type="project" value="UniProtKB-UniRule"/>
</dbReference>
<dbReference type="GO" id="GO:0051539">
    <property type="term" value="F:4 iron, 4 sulfur cluster binding"/>
    <property type="evidence" value="ECO:0007669"/>
    <property type="project" value="UniProtKB-KW"/>
</dbReference>
<dbReference type="GO" id="GO:0009055">
    <property type="term" value="F:electron transfer activity"/>
    <property type="evidence" value="ECO:0007669"/>
    <property type="project" value="UniProtKB-UniRule"/>
</dbReference>
<dbReference type="GO" id="GO:0046872">
    <property type="term" value="F:metal ion binding"/>
    <property type="evidence" value="ECO:0007669"/>
    <property type="project" value="UniProtKB-KW"/>
</dbReference>
<dbReference type="GO" id="GO:0016226">
    <property type="term" value="P:iron-sulfur cluster assembly"/>
    <property type="evidence" value="ECO:0007669"/>
    <property type="project" value="UniProtKB-UniRule"/>
</dbReference>
<dbReference type="Gene3D" id="3.40.50.150">
    <property type="entry name" value="Vaccinia Virus protein VP39"/>
    <property type="match status" value="1"/>
</dbReference>
<dbReference type="HAMAP" id="MF_03115">
    <property type="entry name" value="Anamorsin"/>
    <property type="match status" value="1"/>
</dbReference>
<dbReference type="InterPro" id="IPR007785">
    <property type="entry name" value="Anamorsin"/>
</dbReference>
<dbReference type="InterPro" id="IPR049011">
    <property type="entry name" value="Anamorsin_N_metazoan"/>
</dbReference>
<dbReference type="InterPro" id="IPR046408">
    <property type="entry name" value="CIAPIN1"/>
</dbReference>
<dbReference type="InterPro" id="IPR029063">
    <property type="entry name" value="SAM-dependent_MTases_sf"/>
</dbReference>
<dbReference type="PANTHER" id="PTHR13273">
    <property type="entry name" value="ANAMORSIN"/>
    <property type="match status" value="1"/>
</dbReference>
<dbReference type="PANTHER" id="PTHR13273:SF14">
    <property type="entry name" value="ANAMORSIN"/>
    <property type="match status" value="1"/>
</dbReference>
<dbReference type="Pfam" id="PF20922">
    <property type="entry name" value="Anamorsin_N"/>
    <property type="match status" value="1"/>
</dbReference>
<dbReference type="Pfam" id="PF05093">
    <property type="entry name" value="CIAPIN1"/>
    <property type="match status" value="1"/>
</dbReference>
<sequence>MEQFKGLQKSLYIWTDNAELDKRVEQLKTATGGEVALENVHRLSFASYASSSFDLIVIECAQLTDNYVKLLHMLKPSGKLHLISFIGAAGSLLQEIKLSGFINCSEDSDNTLTAEKPGYETGSSARLSFAKKNSSTLNVWKISGDDDELIDEEDLLDEVDKQKPDPASLKVCSTTGKRKACKNCSCGLADELENEKKQENAAKQASTENAKSSCGNCYLGDAFRCSSCPYLGMPAFKPGEKVQLVDNLLKSDI</sequence>
<keyword id="KW-0001">2Fe-2S</keyword>
<keyword id="KW-0004">4Fe-4S</keyword>
<keyword id="KW-0963">Cytoplasm</keyword>
<keyword id="KW-0408">Iron</keyword>
<keyword id="KW-0411">Iron-sulfur</keyword>
<keyword id="KW-0479">Metal-binding</keyword>
<keyword id="KW-0496">Mitochondrion</keyword>
<keyword id="KW-1185">Reference proteome</keyword>
<feature type="chain" id="PRO_0000392324" description="Anamorsin homolog">
    <location>
        <begin position="1"/>
        <end position="253"/>
    </location>
</feature>
<feature type="region of interest" description="N-terminal SAM-like domain" evidence="1">
    <location>
        <begin position="4"/>
        <end position="129"/>
    </location>
</feature>
<feature type="region of interest" description="Linker" evidence="1">
    <location>
        <begin position="130"/>
        <end position="161"/>
    </location>
</feature>
<feature type="region of interest" description="Fe-S binding site A" evidence="1">
    <location>
        <begin position="172"/>
        <end position="186"/>
    </location>
</feature>
<feature type="region of interest" description="Fe-S binding site B" evidence="1">
    <location>
        <begin position="214"/>
        <end position="228"/>
    </location>
</feature>
<feature type="short sequence motif" description="Cx2C motif 1" evidence="1">
    <location>
        <begin position="214"/>
        <end position="217"/>
    </location>
</feature>
<feature type="short sequence motif" description="Cx2C motif 2" evidence="1">
    <location>
        <begin position="225"/>
        <end position="228"/>
    </location>
</feature>
<feature type="binding site" evidence="1">
    <location>
        <position position="172"/>
    </location>
    <ligand>
        <name>[2Fe-2S] cluster</name>
        <dbReference type="ChEBI" id="CHEBI:190135"/>
    </ligand>
</feature>
<feature type="binding site" evidence="1">
    <location>
        <position position="181"/>
    </location>
    <ligand>
        <name>[2Fe-2S] cluster</name>
        <dbReference type="ChEBI" id="CHEBI:190135"/>
    </ligand>
</feature>
<feature type="binding site" evidence="1">
    <location>
        <position position="184"/>
    </location>
    <ligand>
        <name>[2Fe-2S] cluster</name>
        <dbReference type="ChEBI" id="CHEBI:190135"/>
    </ligand>
</feature>
<feature type="binding site" evidence="1">
    <location>
        <position position="186"/>
    </location>
    <ligand>
        <name>[2Fe-2S] cluster</name>
        <dbReference type="ChEBI" id="CHEBI:190135"/>
    </ligand>
</feature>
<feature type="binding site" evidence="1">
    <location>
        <position position="214"/>
    </location>
    <ligand>
        <name>[4Fe-4S] cluster</name>
        <dbReference type="ChEBI" id="CHEBI:49883"/>
    </ligand>
</feature>
<feature type="binding site" evidence="1">
    <location>
        <position position="217"/>
    </location>
    <ligand>
        <name>[4Fe-4S] cluster</name>
        <dbReference type="ChEBI" id="CHEBI:49883"/>
    </ligand>
</feature>
<feature type="binding site" evidence="1">
    <location>
        <position position="225"/>
    </location>
    <ligand>
        <name>[4Fe-4S] cluster</name>
        <dbReference type="ChEBI" id="CHEBI:49883"/>
    </ligand>
</feature>
<feature type="binding site" evidence="1">
    <location>
        <position position="228"/>
    </location>
    <ligand>
        <name>[4Fe-4S] cluster</name>
        <dbReference type="ChEBI" id="CHEBI:49883"/>
    </ligand>
</feature>